<keyword id="KW-0997">Cell inner membrane</keyword>
<keyword id="KW-1003">Cell membrane</keyword>
<keyword id="KW-0472">Membrane</keyword>
<keyword id="KW-0653">Protein transport</keyword>
<keyword id="KW-0811">Translocation</keyword>
<keyword id="KW-0812">Transmembrane</keyword>
<keyword id="KW-1133">Transmembrane helix</keyword>
<keyword id="KW-0813">Transport</keyword>
<reference key="1">
    <citation type="journal article" date="2008" name="Antimicrob. Agents Chemother.">
        <title>Whole-genome pyrosequencing of an epidemic multidrug-resistant Acinetobacter baumannii strain belonging to the European clone II group.</title>
        <authorList>
            <person name="Iacono M."/>
            <person name="Villa L."/>
            <person name="Fortini D."/>
            <person name="Bordoni R."/>
            <person name="Imperi F."/>
            <person name="Bonnal R.J."/>
            <person name="Sicheritz-Ponten T."/>
            <person name="De Bellis G."/>
            <person name="Visca P."/>
            <person name="Cassone A."/>
            <person name="Carattoli A."/>
        </authorList>
    </citation>
    <scope>NUCLEOTIDE SEQUENCE [LARGE SCALE GENOMIC DNA]</scope>
    <source>
        <strain>ACICU</strain>
    </source>
</reference>
<proteinExistence type="inferred from homology"/>
<sequence>MAGLSIWHVVIFAIVVILLFGTSKLKNIGKDVGGAVRDFKKSVREEDEAASLNSPRTIDAQVKTSESTSVKS</sequence>
<protein>
    <recommendedName>
        <fullName evidence="1">Sec-independent protein translocase protein TatA</fullName>
    </recommendedName>
</protein>
<organism>
    <name type="scientific">Acinetobacter baumannii (strain ACICU)</name>
    <dbReference type="NCBI Taxonomy" id="405416"/>
    <lineage>
        <taxon>Bacteria</taxon>
        <taxon>Pseudomonadati</taxon>
        <taxon>Pseudomonadota</taxon>
        <taxon>Gammaproteobacteria</taxon>
        <taxon>Moraxellales</taxon>
        <taxon>Moraxellaceae</taxon>
        <taxon>Acinetobacter</taxon>
        <taxon>Acinetobacter calcoaceticus/baumannii complex</taxon>
    </lineage>
</organism>
<comment type="function">
    <text evidence="1">Part of the twin-arginine translocation (Tat) system that transports large folded proteins containing a characteristic twin-arginine motif in their signal peptide across membranes. TatA could form the protein-conducting channel of the Tat system.</text>
</comment>
<comment type="subunit">
    <text evidence="1">The Tat system comprises two distinct complexes: a TatABC complex, containing multiple copies of TatA, TatB and TatC subunits, and a separate TatA complex, containing only TatA subunits. Substrates initially bind to the TatABC complex, which probably triggers association of the separate TatA complex to form the active translocon.</text>
</comment>
<comment type="subcellular location">
    <subcellularLocation>
        <location evidence="1">Cell inner membrane</location>
        <topology evidence="1">Single-pass membrane protein</topology>
    </subcellularLocation>
</comment>
<comment type="similarity">
    <text evidence="1">Belongs to the TatA/E family.</text>
</comment>
<gene>
    <name evidence="1" type="primary">tatA</name>
    <name type="ordered locus">ACICU_00477</name>
</gene>
<feature type="chain" id="PRO_1000125175" description="Sec-independent protein translocase protein TatA">
    <location>
        <begin position="1"/>
        <end position="72"/>
    </location>
</feature>
<feature type="transmembrane region" description="Helical" evidence="1">
    <location>
        <begin position="1"/>
        <end position="21"/>
    </location>
</feature>
<feature type="region of interest" description="Disordered" evidence="2">
    <location>
        <begin position="47"/>
        <end position="72"/>
    </location>
</feature>
<feature type="compositionally biased region" description="Polar residues" evidence="2">
    <location>
        <begin position="51"/>
        <end position="72"/>
    </location>
</feature>
<name>TATA_ACIBC</name>
<evidence type="ECO:0000255" key="1">
    <source>
        <dbReference type="HAMAP-Rule" id="MF_00236"/>
    </source>
</evidence>
<evidence type="ECO:0000256" key="2">
    <source>
        <dbReference type="SAM" id="MobiDB-lite"/>
    </source>
</evidence>
<dbReference type="EMBL" id="CP000863">
    <property type="protein sequence ID" value="ACC55789.1"/>
    <property type="molecule type" value="Genomic_DNA"/>
</dbReference>
<dbReference type="RefSeq" id="WP_000908081.1">
    <property type="nucleotide sequence ID" value="NZ_CP031380.1"/>
</dbReference>
<dbReference type="SMR" id="B2I3B1"/>
<dbReference type="KEGG" id="abc:ACICU_00477"/>
<dbReference type="HOGENOM" id="CLU_086034_5_3_6"/>
<dbReference type="Proteomes" id="UP000008839">
    <property type="component" value="Chromosome"/>
</dbReference>
<dbReference type="GO" id="GO:0033281">
    <property type="term" value="C:TAT protein transport complex"/>
    <property type="evidence" value="ECO:0007669"/>
    <property type="project" value="UniProtKB-UniRule"/>
</dbReference>
<dbReference type="GO" id="GO:0008320">
    <property type="term" value="F:protein transmembrane transporter activity"/>
    <property type="evidence" value="ECO:0007669"/>
    <property type="project" value="UniProtKB-UniRule"/>
</dbReference>
<dbReference type="GO" id="GO:0043953">
    <property type="term" value="P:protein transport by the Tat complex"/>
    <property type="evidence" value="ECO:0007669"/>
    <property type="project" value="UniProtKB-UniRule"/>
</dbReference>
<dbReference type="Gene3D" id="1.20.5.3310">
    <property type="match status" value="1"/>
</dbReference>
<dbReference type="HAMAP" id="MF_00236">
    <property type="entry name" value="TatA_E"/>
    <property type="match status" value="1"/>
</dbReference>
<dbReference type="InterPro" id="IPR003369">
    <property type="entry name" value="TatA/B/E"/>
</dbReference>
<dbReference type="InterPro" id="IPR006312">
    <property type="entry name" value="TatA/E"/>
</dbReference>
<dbReference type="NCBIfam" id="TIGR01411">
    <property type="entry name" value="tatAE"/>
    <property type="match status" value="1"/>
</dbReference>
<dbReference type="PANTHER" id="PTHR42982">
    <property type="entry name" value="SEC-INDEPENDENT PROTEIN TRANSLOCASE PROTEIN TATA"/>
    <property type="match status" value="1"/>
</dbReference>
<dbReference type="PANTHER" id="PTHR42982:SF1">
    <property type="entry name" value="SEC-INDEPENDENT PROTEIN TRANSLOCASE PROTEIN TATA"/>
    <property type="match status" value="1"/>
</dbReference>
<dbReference type="Pfam" id="PF02416">
    <property type="entry name" value="TatA_B_E"/>
    <property type="match status" value="1"/>
</dbReference>
<accession>B2I3B1</accession>